<organism>
    <name type="scientific">Francisella tularensis subsp. mediasiatica (strain FSC147)</name>
    <dbReference type="NCBI Taxonomy" id="441952"/>
    <lineage>
        <taxon>Bacteria</taxon>
        <taxon>Pseudomonadati</taxon>
        <taxon>Pseudomonadota</taxon>
        <taxon>Gammaproteobacteria</taxon>
        <taxon>Thiotrichales</taxon>
        <taxon>Francisellaceae</taxon>
        <taxon>Francisella</taxon>
    </lineage>
</organism>
<feature type="chain" id="PRO_1000142266" description="Large ribosomal subunit protein uL22">
    <location>
        <begin position="1"/>
        <end position="111"/>
    </location>
</feature>
<name>RL22_FRATM</name>
<keyword id="KW-0687">Ribonucleoprotein</keyword>
<keyword id="KW-0689">Ribosomal protein</keyword>
<keyword id="KW-0694">RNA-binding</keyword>
<keyword id="KW-0699">rRNA-binding</keyword>
<dbReference type="EMBL" id="CP000915">
    <property type="protein sequence ID" value="ACD31344.1"/>
    <property type="molecule type" value="Genomic_DNA"/>
</dbReference>
<dbReference type="SMR" id="B2SDY0"/>
<dbReference type="KEGG" id="ftm:FTM_1522"/>
<dbReference type="HOGENOM" id="CLU_083987_3_3_6"/>
<dbReference type="GO" id="GO:0022625">
    <property type="term" value="C:cytosolic large ribosomal subunit"/>
    <property type="evidence" value="ECO:0007669"/>
    <property type="project" value="TreeGrafter"/>
</dbReference>
<dbReference type="GO" id="GO:0019843">
    <property type="term" value="F:rRNA binding"/>
    <property type="evidence" value="ECO:0007669"/>
    <property type="project" value="UniProtKB-UniRule"/>
</dbReference>
<dbReference type="GO" id="GO:0003735">
    <property type="term" value="F:structural constituent of ribosome"/>
    <property type="evidence" value="ECO:0007669"/>
    <property type="project" value="InterPro"/>
</dbReference>
<dbReference type="GO" id="GO:0006412">
    <property type="term" value="P:translation"/>
    <property type="evidence" value="ECO:0007669"/>
    <property type="project" value="UniProtKB-UniRule"/>
</dbReference>
<dbReference type="CDD" id="cd00336">
    <property type="entry name" value="Ribosomal_L22"/>
    <property type="match status" value="1"/>
</dbReference>
<dbReference type="FunFam" id="3.90.470.10:FF:000001">
    <property type="entry name" value="50S ribosomal protein L22"/>
    <property type="match status" value="1"/>
</dbReference>
<dbReference type="Gene3D" id="3.90.470.10">
    <property type="entry name" value="Ribosomal protein L22/L17"/>
    <property type="match status" value="1"/>
</dbReference>
<dbReference type="HAMAP" id="MF_01331_B">
    <property type="entry name" value="Ribosomal_uL22_B"/>
    <property type="match status" value="1"/>
</dbReference>
<dbReference type="InterPro" id="IPR001063">
    <property type="entry name" value="Ribosomal_uL22"/>
</dbReference>
<dbReference type="InterPro" id="IPR005727">
    <property type="entry name" value="Ribosomal_uL22_bac/chlpt-type"/>
</dbReference>
<dbReference type="InterPro" id="IPR047867">
    <property type="entry name" value="Ribosomal_uL22_bac/org-type"/>
</dbReference>
<dbReference type="InterPro" id="IPR018260">
    <property type="entry name" value="Ribosomal_uL22_CS"/>
</dbReference>
<dbReference type="InterPro" id="IPR036394">
    <property type="entry name" value="Ribosomal_uL22_sf"/>
</dbReference>
<dbReference type="NCBIfam" id="TIGR01044">
    <property type="entry name" value="rplV_bact"/>
    <property type="match status" value="1"/>
</dbReference>
<dbReference type="PANTHER" id="PTHR13501">
    <property type="entry name" value="CHLOROPLAST 50S RIBOSOMAL PROTEIN L22-RELATED"/>
    <property type="match status" value="1"/>
</dbReference>
<dbReference type="PANTHER" id="PTHR13501:SF8">
    <property type="entry name" value="LARGE RIBOSOMAL SUBUNIT PROTEIN UL22M"/>
    <property type="match status" value="1"/>
</dbReference>
<dbReference type="Pfam" id="PF00237">
    <property type="entry name" value="Ribosomal_L22"/>
    <property type="match status" value="1"/>
</dbReference>
<dbReference type="SUPFAM" id="SSF54843">
    <property type="entry name" value="Ribosomal protein L22"/>
    <property type="match status" value="1"/>
</dbReference>
<dbReference type="PROSITE" id="PS00464">
    <property type="entry name" value="RIBOSOMAL_L22"/>
    <property type="match status" value="1"/>
</dbReference>
<sequence>MEVQAKLKFARISAQKCRLVADQIRGLPVEQAINLLTFSNKKAAVLIKGVLNSAVANAEHNDGMDVDSLVVSTIFVDEGPTMKRFEARAKGRGNRILKRTSHITVKVAEKK</sequence>
<comment type="function">
    <text evidence="1">This protein binds specifically to 23S rRNA; its binding is stimulated by other ribosomal proteins, e.g. L4, L17, and L20. It is important during the early stages of 50S assembly. It makes multiple contacts with different domains of the 23S rRNA in the assembled 50S subunit and ribosome (By similarity).</text>
</comment>
<comment type="function">
    <text evidence="1">The globular domain of the protein is located near the polypeptide exit tunnel on the outside of the subunit, while an extended beta-hairpin is found that lines the wall of the exit tunnel in the center of the 70S ribosome.</text>
</comment>
<comment type="subunit">
    <text evidence="1">Part of the 50S ribosomal subunit.</text>
</comment>
<comment type="similarity">
    <text evidence="1">Belongs to the universal ribosomal protein uL22 family.</text>
</comment>
<reference key="1">
    <citation type="journal article" date="2009" name="PLoS Pathog.">
        <title>Molecular evolutionary consequences of niche restriction in Francisella tularensis, a facultative intracellular pathogen.</title>
        <authorList>
            <person name="Larsson P."/>
            <person name="Elfsmark D."/>
            <person name="Svensson K."/>
            <person name="Wikstroem P."/>
            <person name="Forsman M."/>
            <person name="Brettin T."/>
            <person name="Keim P."/>
            <person name="Johansson A."/>
        </authorList>
    </citation>
    <scope>NUCLEOTIDE SEQUENCE [LARGE SCALE GENOMIC DNA]</scope>
    <source>
        <strain>FSC147</strain>
    </source>
</reference>
<proteinExistence type="inferred from homology"/>
<evidence type="ECO:0000255" key="1">
    <source>
        <dbReference type="HAMAP-Rule" id="MF_01331"/>
    </source>
</evidence>
<evidence type="ECO:0000305" key="2"/>
<protein>
    <recommendedName>
        <fullName evidence="1">Large ribosomal subunit protein uL22</fullName>
    </recommendedName>
    <alternativeName>
        <fullName evidence="2">50S ribosomal protein L22</fullName>
    </alternativeName>
</protein>
<gene>
    <name evidence="1" type="primary">rplV</name>
    <name type="ordered locus">FTM_1522</name>
</gene>
<accession>B2SDY0</accession>